<name>Y2506_BURTA</name>
<proteinExistence type="inferred from homology"/>
<comment type="similarity">
    <text evidence="1">Belongs to the UPF0303 family.</text>
</comment>
<feature type="chain" id="PRO_1000046745" description="UPF0303 protein BTH_I2506">
    <location>
        <begin position="1"/>
        <end position="165"/>
    </location>
</feature>
<protein>
    <recommendedName>
        <fullName evidence="1">UPF0303 protein BTH_I2506</fullName>
    </recommendedName>
</protein>
<evidence type="ECO:0000255" key="1">
    <source>
        <dbReference type="HAMAP-Rule" id="MF_00761"/>
    </source>
</evidence>
<organism>
    <name type="scientific">Burkholderia thailandensis (strain ATCC 700388 / DSM 13276 / CCUG 48851 / CIP 106301 / E264)</name>
    <dbReference type="NCBI Taxonomy" id="271848"/>
    <lineage>
        <taxon>Bacteria</taxon>
        <taxon>Pseudomonadati</taxon>
        <taxon>Pseudomonadota</taxon>
        <taxon>Betaproteobacteria</taxon>
        <taxon>Burkholderiales</taxon>
        <taxon>Burkholderiaceae</taxon>
        <taxon>Burkholderia</taxon>
        <taxon>pseudomallei group</taxon>
    </lineage>
</organism>
<accession>Q2SVM3</accession>
<sequence>MDIALDLQSIAVQEKTLVFPQFDAARAWALGSQLRELALARGHAVAIDVRTFGQPLFFALLDGATPDNVDWARRKGNVVAHFRRSSYAVGLRMQQAGATLADKHGLPVAEYASHGGAFPLAVAGAGVIGSVTVSGLPQRGDHELVVEALCAQLGHAYETLALARS</sequence>
<reference key="1">
    <citation type="journal article" date="2005" name="BMC Genomics">
        <title>Bacterial genome adaptation to niches: divergence of the potential virulence genes in three Burkholderia species of different survival strategies.</title>
        <authorList>
            <person name="Kim H.S."/>
            <person name="Schell M.A."/>
            <person name="Yu Y."/>
            <person name="Ulrich R.L."/>
            <person name="Sarria S.H."/>
            <person name="Nierman W.C."/>
            <person name="DeShazer D."/>
        </authorList>
    </citation>
    <scope>NUCLEOTIDE SEQUENCE [LARGE SCALE GENOMIC DNA]</scope>
    <source>
        <strain>ATCC 700388 / DSM 13276 / CCUG 48851 / CIP 106301 / E264</strain>
    </source>
</reference>
<gene>
    <name type="ordered locus">BTH_I2506</name>
</gene>
<dbReference type="EMBL" id="CP000086">
    <property type="protein sequence ID" value="ABC37889.1"/>
    <property type="molecule type" value="Genomic_DNA"/>
</dbReference>
<dbReference type="RefSeq" id="WP_009891381.1">
    <property type="nucleotide sequence ID" value="NZ_CP008785.1"/>
</dbReference>
<dbReference type="SMR" id="Q2SVM3"/>
<dbReference type="GeneID" id="45122216"/>
<dbReference type="KEGG" id="bte:BTH_I2506"/>
<dbReference type="HOGENOM" id="CLU_101036_2_1_4"/>
<dbReference type="Proteomes" id="UP000001930">
    <property type="component" value="Chromosome I"/>
</dbReference>
<dbReference type="Gene3D" id="3.30.450.150">
    <property type="entry name" value="Haem-degrading domain"/>
    <property type="match status" value="1"/>
</dbReference>
<dbReference type="HAMAP" id="MF_00761">
    <property type="entry name" value="UPF0303"/>
    <property type="match status" value="1"/>
</dbReference>
<dbReference type="InterPro" id="IPR005624">
    <property type="entry name" value="PduO/GlcC-like"/>
</dbReference>
<dbReference type="InterPro" id="IPR038084">
    <property type="entry name" value="PduO/GlcC-like_sf"/>
</dbReference>
<dbReference type="InterPro" id="IPR010371">
    <property type="entry name" value="YBR137W-like"/>
</dbReference>
<dbReference type="NCBIfam" id="NF002695">
    <property type="entry name" value="PRK02487.1-4"/>
    <property type="match status" value="1"/>
</dbReference>
<dbReference type="NCBIfam" id="NF002696">
    <property type="entry name" value="PRK02487.1-5"/>
    <property type="match status" value="1"/>
</dbReference>
<dbReference type="PANTHER" id="PTHR28255">
    <property type="match status" value="1"/>
</dbReference>
<dbReference type="PANTHER" id="PTHR28255:SF1">
    <property type="entry name" value="UPF0303 PROTEIN YBR137W"/>
    <property type="match status" value="1"/>
</dbReference>
<dbReference type="Pfam" id="PF03928">
    <property type="entry name" value="HbpS-like"/>
    <property type="match status" value="1"/>
</dbReference>
<dbReference type="PIRSF" id="PIRSF008757">
    <property type="entry name" value="UCP008757"/>
    <property type="match status" value="1"/>
</dbReference>
<dbReference type="SUPFAM" id="SSF143744">
    <property type="entry name" value="GlcG-like"/>
    <property type="match status" value="1"/>
</dbReference>